<sequence>MRLILLGPPGAGKGTQANFIKEKFGIPQISTGDMLRAAVKAGTPLGIEAKKVMDAGGLVSDEIIIGLVKDRLQQDDCKAGYMFDGFPRTIPQADAMKDAGVPIDFVLEIDVPDSEIVERMSGRRAHLASGRTYHVKYNPPKVEGKDDVTGEDLVQRDDDKEETVKKRLDVYHAQTKPLVEYYSSWAASGDAKAPKVRKISGLGAVDEITARAFDALK</sequence>
<reference key="1">
    <citation type="journal article" date="2006" name="Nat. Biotechnol.">
        <title>Complete genome of the mutualistic, N2-fixing grass endophyte Azoarcus sp. strain BH72.</title>
        <authorList>
            <person name="Krause A."/>
            <person name="Ramakumar A."/>
            <person name="Bartels D."/>
            <person name="Battistoni F."/>
            <person name="Bekel T."/>
            <person name="Boch J."/>
            <person name="Boehm M."/>
            <person name="Friedrich F."/>
            <person name="Hurek T."/>
            <person name="Krause L."/>
            <person name="Linke B."/>
            <person name="McHardy A.C."/>
            <person name="Sarkar A."/>
            <person name="Schneiker S."/>
            <person name="Syed A.A."/>
            <person name="Thauer R."/>
            <person name="Vorhoelter F.-J."/>
            <person name="Weidner S."/>
            <person name="Puehler A."/>
            <person name="Reinhold-Hurek B."/>
            <person name="Kaiser O."/>
            <person name="Goesmann A."/>
        </authorList>
    </citation>
    <scope>NUCLEOTIDE SEQUENCE [LARGE SCALE GENOMIC DNA]</scope>
    <source>
        <strain>BH72</strain>
    </source>
</reference>
<protein>
    <recommendedName>
        <fullName evidence="1">Adenylate kinase</fullName>
        <shortName evidence="1">AK</shortName>
        <ecNumber evidence="1">2.7.4.3</ecNumber>
    </recommendedName>
    <alternativeName>
        <fullName evidence="1">ATP-AMP transphosphorylase</fullName>
    </alternativeName>
    <alternativeName>
        <fullName evidence="1">ATP:AMP phosphotransferase</fullName>
    </alternativeName>
    <alternativeName>
        <fullName evidence="1">Adenylate monophosphate kinase</fullName>
    </alternativeName>
</protein>
<name>KAD_AZOSB</name>
<accession>A1K5I5</accession>
<feature type="chain" id="PRO_1000058782" description="Adenylate kinase">
    <location>
        <begin position="1"/>
        <end position="217"/>
    </location>
</feature>
<feature type="region of interest" description="NMP" evidence="1">
    <location>
        <begin position="30"/>
        <end position="59"/>
    </location>
</feature>
<feature type="region of interest" description="LID" evidence="1">
    <location>
        <begin position="122"/>
        <end position="159"/>
    </location>
</feature>
<feature type="binding site" evidence="1">
    <location>
        <begin position="10"/>
        <end position="15"/>
    </location>
    <ligand>
        <name>ATP</name>
        <dbReference type="ChEBI" id="CHEBI:30616"/>
    </ligand>
</feature>
<feature type="binding site" evidence="1">
    <location>
        <position position="31"/>
    </location>
    <ligand>
        <name>AMP</name>
        <dbReference type="ChEBI" id="CHEBI:456215"/>
    </ligand>
</feature>
<feature type="binding site" evidence="1">
    <location>
        <position position="36"/>
    </location>
    <ligand>
        <name>AMP</name>
        <dbReference type="ChEBI" id="CHEBI:456215"/>
    </ligand>
</feature>
<feature type="binding site" evidence="1">
    <location>
        <begin position="57"/>
        <end position="59"/>
    </location>
    <ligand>
        <name>AMP</name>
        <dbReference type="ChEBI" id="CHEBI:456215"/>
    </ligand>
</feature>
<feature type="binding site" evidence="1">
    <location>
        <begin position="85"/>
        <end position="88"/>
    </location>
    <ligand>
        <name>AMP</name>
        <dbReference type="ChEBI" id="CHEBI:456215"/>
    </ligand>
</feature>
<feature type="binding site" evidence="1">
    <location>
        <position position="92"/>
    </location>
    <ligand>
        <name>AMP</name>
        <dbReference type="ChEBI" id="CHEBI:456215"/>
    </ligand>
</feature>
<feature type="binding site" evidence="1">
    <location>
        <position position="123"/>
    </location>
    <ligand>
        <name>ATP</name>
        <dbReference type="ChEBI" id="CHEBI:30616"/>
    </ligand>
</feature>
<feature type="binding site" evidence="1">
    <location>
        <begin position="132"/>
        <end position="133"/>
    </location>
    <ligand>
        <name>ATP</name>
        <dbReference type="ChEBI" id="CHEBI:30616"/>
    </ligand>
</feature>
<feature type="binding site" evidence="1">
    <location>
        <position position="156"/>
    </location>
    <ligand>
        <name>AMP</name>
        <dbReference type="ChEBI" id="CHEBI:456215"/>
    </ligand>
</feature>
<feature type="binding site" evidence="1">
    <location>
        <position position="167"/>
    </location>
    <ligand>
        <name>AMP</name>
        <dbReference type="ChEBI" id="CHEBI:456215"/>
    </ligand>
</feature>
<feature type="binding site" evidence="1">
    <location>
        <position position="203"/>
    </location>
    <ligand>
        <name>ATP</name>
        <dbReference type="ChEBI" id="CHEBI:30616"/>
    </ligand>
</feature>
<organism>
    <name type="scientific">Azoarcus sp. (strain BH72)</name>
    <dbReference type="NCBI Taxonomy" id="418699"/>
    <lineage>
        <taxon>Bacteria</taxon>
        <taxon>Pseudomonadati</taxon>
        <taxon>Pseudomonadota</taxon>
        <taxon>Betaproteobacteria</taxon>
        <taxon>Rhodocyclales</taxon>
        <taxon>Zoogloeaceae</taxon>
        <taxon>Azoarcus</taxon>
    </lineage>
</organism>
<proteinExistence type="inferred from homology"/>
<dbReference type="EC" id="2.7.4.3" evidence="1"/>
<dbReference type="EMBL" id="AM406670">
    <property type="protein sequence ID" value="CAL94090.1"/>
    <property type="molecule type" value="Genomic_DNA"/>
</dbReference>
<dbReference type="RefSeq" id="WP_011765206.1">
    <property type="nucleotide sequence ID" value="NC_008702.1"/>
</dbReference>
<dbReference type="SMR" id="A1K5I5"/>
<dbReference type="STRING" id="62928.azo1473"/>
<dbReference type="KEGG" id="azo:azo1473"/>
<dbReference type="eggNOG" id="COG0563">
    <property type="taxonomic scope" value="Bacteria"/>
</dbReference>
<dbReference type="HOGENOM" id="CLU_032354_1_2_4"/>
<dbReference type="UniPathway" id="UPA00588">
    <property type="reaction ID" value="UER00649"/>
</dbReference>
<dbReference type="Proteomes" id="UP000002588">
    <property type="component" value="Chromosome"/>
</dbReference>
<dbReference type="GO" id="GO:0005737">
    <property type="term" value="C:cytoplasm"/>
    <property type="evidence" value="ECO:0007669"/>
    <property type="project" value="UniProtKB-SubCell"/>
</dbReference>
<dbReference type="GO" id="GO:0004017">
    <property type="term" value="F:adenylate kinase activity"/>
    <property type="evidence" value="ECO:0007669"/>
    <property type="project" value="UniProtKB-UniRule"/>
</dbReference>
<dbReference type="GO" id="GO:0005524">
    <property type="term" value="F:ATP binding"/>
    <property type="evidence" value="ECO:0007669"/>
    <property type="project" value="UniProtKB-UniRule"/>
</dbReference>
<dbReference type="GO" id="GO:0044209">
    <property type="term" value="P:AMP salvage"/>
    <property type="evidence" value="ECO:0007669"/>
    <property type="project" value="UniProtKB-UniRule"/>
</dbReference>
<dbReference type="CDD" id="cd01428">
    <property type="entry name" value="ADK"/>
    <property type="match status" value="1"/>
</dbReference>
<dbReference type="FunFam" id="3.40.50.300:FF:000106">
    <property type="entry name" value="Adenylate kinase mitochondrial"/>
    <property type="match status" value="1"/>
</dbReference>
<dbReference type="Gene3D" id="3.40.50.300">
    <property type="entry name" value="P-loop containing nucleotide triphosphate hydrolases"/>
    <property type="match status" value="1"/>
</dbReference>
<dbReference type="HAMAP" id="MF_00235">
    <property type="entry name" value="Adenylate_kinase_Adk"/>
    <property type="match status" value="1"/>
</dbReference>
<dbReference type="InterPro" id="IPR006259">
    <property type="entry name" value="Adenyl_kin_sub"/>
</dbReference>
<dbReference type="InterPro" id="IPR000850">
    <property type="entry name" value="Adenylat/UMP-CMP_kin"/>
</dbReference>
<dbReference type="InterPro" id="IPR033690">
    <property type="entry name" value="Adenylat_kinase_CS"/>
</dbReference>
<dbReference type="InterPro" id="IPR007862">
    <property type="entry name" value="Adenylate_kinase_lid-dom"/>
</dbReference>
<dbReference type="InterPro" id="IPR027417">
    <property type="entry name" value="P-loop_NTPase"/>
</dbReference>
<dbReference type="NCBIfam" id="TIGR01351">
    <property type="entry name" value="adk"/>
    <property type="match status" value="1"/>
</dbReference>
<dbReference type="NCBIfam" id="NF001379">
    <property type="entry name" value="PRK00279.1-1"/>
    <property type="match status" value="1"/>
</dbReference>
<dbReference type="NCBIfam" id="NF001380">
    <property type="entry name" value="PRK00279.1-2"/>
    <property type="match status" value="1"/>
</dbReference>
<dbReference type="NCBIfam" id="NF001381">
    <property type="entry name" value="PRK00279.1-3"/>
    <property type="match status" value="1"/>
</dbReference>
<dbReference type="NCBIfam" id="NF011100">
    <property type="entry name" value="PRK14527.1"/>
    <property type="match status" value="1"/>
</dbReference>
<dbReference type="PANTHER" id="PTHR23359">
    <property type="entry name" value="NUCLEOTIDE KINASE"/>
    <property type="match status" value="1"/>
</dbReference>
<dbReference type="Pfam" id="PF00406">
    <property type="entry name" value="ADK"/>
    <property type="match status" value="1"/>
</dbReference>
<dbReference type="Pfam" id="PF05191">
    <property type="entry name" value="ADK_lid"/>
    <property type="match status" value="1"/>
</dbReference>
<dbReference type="PRINTS" id="PR00094">
    <property type="entry name" value="ADENYLTKNASE"/>
</dbReference>
<dbReference type="SUPFAM" id="SSF52540">
    <property type="entry name" value="P-loop containing nucleoside triphosphate hydrolases"/>
    <property type="match status" value="1"/>
</dbReference>
<dbReference type="PROSITE" id="PS00113">
    <property type="entry name" value="ADENYLATE_KINASE"/>
    <property type="match status" value="1"/>
</dbReference>
<keyword id="KW-0067">ATP-binding</keyword>
<keyword id="KW-0963">Cytoplasm</keyword>
<keyword id="KW-0418">Kinase</keyword>
<keyword id="KW-0545">Nucleotide biosynthesis</keyword>
<keyword id="KW-0547">Nucleotide-binding</keyword>
<keyword id="KW-1185">Reference proteome</keyword>
<keyword id="KW-0808">Transferase</keyword>
<gene>
    <name evidence="1" type="primary">adk</name>
    <name type="ordered locus">azo1473</name>
</gene>
<evidence type="ECO:0000255" key="1">
    <source>
        <dbReference type="HAMAP-Rule" id="MF_00235"/>
    </source>
</evidence>
<comment type="function">
    <text evidence="1">Catalyzes the reversible transfer of the terminal phosphate group between ATP and AMP. Plays an important role in cellular energy homeostasis and in adenine nucleotide metabolism.</text>
</comment>
<comment type="catalytic activity">
    <reaction evidence="1">
        <text>AMP + ATP = 2 ADP</text>
        <dbReference type="Rhea" id="RHEA:12973"/>
        <dbReference type="ChEBI" id="CHEBI:30616"/>
        <dbReference type="ChEBI" id="CHEBI:456215"/>
        <dbReference type="ChEBI" id="CHEBI:456216"/>
        <dbReference type="EC" id="2.7.4.3"/>
    </reaction>
</comment>
<comment type="pathway">
    <text evidence="1">Purine metabolism; AMP biosynthesis via salvage pathway; AMP from ADP: step 1/1.</text>
</comment>
<comment type="subunit">
    <text evidence="1">Monomer.</text>
</comment>
<comment type="subcellular location">
    <subcellularLocation>
        <location evidence="1">Cytoplasm</location>
    </subcellularLocation>
</comment>
<comment type="domain">
    <text evidence="1">Consists of three domains, a large central CORE domain and two small peripheral domains, NMPbind and LID, which undergo movements during catalysis. The LID domain closes over the site of phosphoryl transfer upon ATP binding. Assembling and dissambling the active center during each catalytic cycle provides an effective means to prevent ATP hydrolysis.</text>
</comment>
<comment type="similarity">
    <text evidence="1">Belongs to the adenylate kinase family.</text>
</comment>